<gene>
    <name evidence="1" type="primary">nadK</name>
    <name type="ordered locus">SNSL254_A2896</name>
</gene>
<keyword id="KW-0067">ATP-binding</keyword>
<keyword id="KW-0963">Cytoplasm</keyword>
<keyword id="KW-0418">Kinase</keyword>
<keyword id="KW-0520">NAD</keyword>
<keyword id="KW-0521">NADP</keyword>
<keyword id="KW-0547">Nucleotide-binding</keyword>
<keyword id="KW-0808">Transferase</keyword>
<proteinExistence type="inferred from homology"/>
<sequence>MNNHFKCIGIVGHPRHPTALTTHEMLYRWLCDQGYEVIVEQQIAHELQLKNVPTGTLAEIGQQADLAVVVGGDGNMLGAARTLARYDINVIGINRGNLGFLTDLDPDNALQQLSDVLEGRYISEKRFLLEAQVCQQDRQKRISTAINEVVLHPGKVAHMIEFEVYIDETFAFSQRSDGLIISTPTGSTAYSLSAGGPILTPSLDAITLVPMFPHTLSARPLVINSSSTIRLRFSHRRSDLEISCDSQIALPIQEGEDVLIRRCDYHLNLIHPKDYSYFNTLSTKLGWSKKLF</sequence>
<evidence type="ECO:0000255" key="1">
    <source>
        <dbReference type="HAMAP-Rule" id="MF_00361"/>
    </source>
</evidence>
<accession>B4T2C0</accession>
<comment type="function">
    <text evidence="1">Involved in the regulation of the intracellular balance of NAD and NADP, and is a key enzyme in the biosynthesis of NADP. Catalyzes specifically the phosphorylation on 2'-hydroxyl of the adenosine moiety of NAD to yield NADP.</text>
</comment>
<comment type="catalytic activity">
    <reaction evidence="1">
        <text>NAD(+) + ATP = ADP + NADP(+) + H(+)</text>
        <dbReference type="Rhea" id="RHEA:18629"/>
        <dbReference type="ChEBI" id="CHEBI:15378"/>
        <dbReference type="ChEBI" id="CHEBI:30616"/>
        <dbReference type="ChEBI" id="CHEBI:57540"/>
        <dbReference type="ChEBI" id="CHEBI:58349"/>
        <dbReference type="ChEBI" id="CHEBI:456216"/>
        <dbReference type="EC" id="2.7.1.23"/>
    </reaction>
</comment>
<comment type="cofactor">
    <cofactor evidence="1">
        <name>a divalent metal cation</name>
        <dbReference type="ChEBI" id="CHEBI:60240"/>
    </cofactor>
</comment>
<comment type="subcellular location">
    <subcellularLocation>
        <location evidence="1">Cytoplasm</location>
    </subcellularLocation>
</comment>
<comment type="similarity">
    <text evidence="1">Belongs to the NAD kinase family.</text>
</comment>
<protein>
    <recommendedName>
        <fullName evidence="1">NAD kinase</fullName>
        <ecNumber evidence="1">2.7.1.23</ecNumber>
    </recommendedName>
    <alternativeName>
        <fullName evidence="1">ATP-dependent NAD kinase</fullName>
    </alternativeName>
</protein>
<reference key="1">
    <citation type="journal article" date="2011" name="J. Bacteriol.">
        <title>Comparative genomics of 28 Salmonella enterica isolates: evidence for CRISPR-mediated adaptive sublineage evolution.</title>
        <authorList>
            <person name="Fricke W.F."/>
            <person name="Mammel M.K."/>
            <person name="McDermott P.F."/>
            <person name="Tartera C."/>
            <person name="White D.G."/>
            <person name="Leclerc J.E."/>
            <person name="Ravel J."/>
            <person name="Cebula T.A."/>
        </authorList>
    </citation>
    <scope>NUCLEOTIDE SEQUENCE [LARGE SCALE GENOMIC DNA]</scope>
    <source>
        <strain>SL254</strain>
    </source>
</reference>
<organism>
    <name type="scientific">Salmonella newport (strain SL254)</name>
    <dbReference type="NCBI Taxonomy" id="423368"/>
    <lineage>
        <taxon>Bacteria</taxon>
        <taxon>Pseudomonadati</taxon>
        <taxon>Pseudomonadota</taxon>
        <taxon>Gammaproteobacteria</taxon>
        <taxon>Enterobacterales</taxon>
        <taxon>Enterobacteriaceae</taxon>
        <taxon>Salmonella</taxon>
    </lineage>
</organism>
<feature type="chain" id="PRO_1000120885" description="NAD kinase">
    <location>
        <begin position="1"/>
        <end position="292"/>
    </location>
</feature>
<feature type="active site" description="Proton acceptor" evidence="1">
    <location>
        <position position="73"/>
    </location>
</feature>
<feature type="binding site" evidence="1">
    <location>
        <begin position="73"/>
        <end position="74"/>
    </location>
    <ligand>
        <name>NAD(+)</name>
        <dbReference type="ChEBI" id="CHEBI:57540"/>
    </ligand>
</feature>
<feature type="binding site" evidence="1">
    <location>
        <begin position="147"/>
        <end position="148"/>
    </location>
    <ligand>
        <name>NAD(+)</name>
        <dbReference type="ChEBI" id="CHEBI:57540"/>
    </ligand>
</feature>
<feature type="binding site" evidence="1">
    <location>
        <position position="158"/>
    </location>
    <ligand>
        <name>NAD(+)</name>
        <dbReference type="ChEBI" id="CHEBI:57540"/>
    </ligand>
</feature>
<feature type="binding site" evidence="1">
    <location>
        <position position="175"/>
    </location>
    <ligand>
        <name>NAD(+)</name>
        <dbReference type="ChEBI" id="CHEBI:57540"/>
    </ligand>
</feature>
<feature type="binding site" evidence="1">
    <location>
        <position position="177"/>
    </location>
    <ligand>
        <name>NAD(+)</name>
        <dbReference type="ChEBI" id="CHEBI:57540"/>
    </ligand>
</feature>
<feature type="binding site" evidence="1">
    <location>
        <begin position="188"/>
        <end position="193"/>
    </location>
    <ligand>
        <name>NAD(+)</name>
        <dbReference type="ChEBI" id="CHEBI:57540"/>
    </ligand>
</feature>
<feature type="binding site" evidence="1">
    <location>
        <position position="247"/>
    </location>
    <ligand>
        <name>NAD(+)</name>
        <dbReference type="ChEBI" id="CHEBI:57540"/>
    </ligand>
</feature>
<dbReference type="EC" id="2.7.1.23" evidence="1"/>
<dbReference type="EMBL" id="CP001113">
    <property type="protein sequence ID" value="ACF62967.1"/>
    <property type="molecule type" value="Genomic_DNA"/>
</dbReference>
<dbReference type="RefSeq" id="WP_001059155.1">
    <property type="nucleotide sequence ID" value="NZ_CCMR01000001.1"/>
</dbReference>
<dbReference type="SMR" id="B4T2C0"/>
<dbReference type="KEGG" id="see:SNSL254_A2896"/>
<dbReference type="HOGENOM" id="CLU_008831_0_1_6"/>
<dbReference type="Proteomes" id="UP000008824">
    <property type="component" value="Chromosome"/>
</dbReference>
<dbReference type="GO" id="GO:0005737">
    <property type="term" value="C:cytoplasm"/>
    <property type="evidence" value="ECO:0007669"/>
    <property type="project" value="UniProtKB-SubCell"/>
</dbReference>
<dbReference type="GO" id="GO:0005524">
    <property type="term" value="F:ATP binding"/>
    <property type="evidence" value="ECO:0007669"/>
    <property type="project" value="UniProtKB-KW"/>
</dbReference>
<dbReference type="GO" id="GO:0046872">
    <property type="term" value="F:metal ion binding"/>
    <property type="evidence" value="ECO:0007669"/>
    <property type="project" value="UniProtKB-UniRule"/>
</dbReference>
<dbReference type="GO" id="GO:0051287">
    <property type="term" value="F:NAD binding"/>
    <property type="evidence" value="ECO:0007669"/>
    <property type="project" value="UniProtKB-ARBA"/>
</dbReference>
<dbReference type="GO" id="GO:0003951">
    <property type="term" value="F:NAD+ kinase activity"/>
    <property type="evidence" value="ECO:0007669"/>
    <property type="project" value="UniProtKB-UniRule"/>
</dbReference>
<dbReference type="GO" id="GO:0019674">
    <property type="term" value="P:NAD metabolic process"/>
    <property type="evidence" value="ECO:0007669"/>
    <property type="project" value="InterPro"/>
</dbReference>
<dbReference type="GO" id="GO:0006741">
    <property type="term" value="P:NADP biosynthetic process"/>
    <property type="evidence" value="ECO:0007669"/>
    <property type="project" value="UniProtKB-UniRule"/>
</dbReference>
<dbReference type="FunFam" id="2.60.200.30:FF:000001">
    <property type="entry name" value="NAD kinase"/>
    <property type="match status" value="1"/>
</dbReference>
<dbReference type="FunFam" id="3.40.50.10330:FF:000004">
    <property type="entry name" value="NAD kinase"/>
    <property type="match status" value="1"/>
</dbReference>
<dbReference type="Gene3D" id="3.40.50.10330">
    <property type="entry name" value="Probable inorganic polyphosphate/atp-NAD kinase, domain 1"/>
    <property type="match status" value="1"/>
</dbReference>
<dbReference type="Gene3D" id="2.60.200.30">
    <property type="entry name" value="Probable inorganic polyphosphate/atp-NAD kinase, domain 2"/>
    <property type="match status" value="1"/>
</dbReference>
<dbReference type="HAMAP" id="MF_00361">
    <property type="entry name" value="NAD_kinase"/>
    <property type="match status" value="1"/>
</dbReference>
<dbReference type="InterPro" id="IPR017438">
    <property type="entry name" value="ATP-NAD_kinase_N"/>
</dbReference>
<dbReference type="InterPro" id="IPR017437">
    <property type="entry name" value="ATP-NAD_kinase_PpnK-typ_C"/>
</dbReference>
<dbReference type="InterPro" id="IPR016064">
    <property type="entry name" value="NAD/diacylglycerol_kinase_sf"/>
</dbReference>
<dbReference type="InterPro" id="IPR002504">
    <property type="entry name" value="NADK"/>
</dbReference>
<dbReference type="NCBIfam" id="NF002306">
    <property type="entry name" value="PRK01231.1"/>
    <property type="match status" value="1"/>
</dbReference>
<dbReference type="NCBIfam" id="NF002893">
    <property type="entry name" value="PRK03378.1"/>
    <property type="match status" value="1"/>
</dbReference>
<dbReference type="PANTHER" id="PTHR20275">
    <property type="entry name" value="NAD KINASE"/>
    <property type="match status" value="1"/>
</dbReference>
<dbReference type="PANTHER" id="PTHR20275:SF0">
    <property type="entry name" value="NAD KINASE"/>
    <property type="match status" value="1"/>
</dbReference>
<dbReference type="Pfam" id="PF01513">
    <property type="entry name" value="NAD_kinase"/>
    <property type="match status" value="1"/>
</dbReference>
<dbReference type="Pfam" id="PF20143">
    <property type="entry name" value="NAD_kinase_C"/>
    <property type="match status" value="1"/>
</dbReference>
<dbReference type="SUPFAM" id="SSF111331">
    <property type="entry name" value="NAD kinase/diacylglycerol kinase-like"/>
    <property type="match status" value="1"/>
</dbReference>
<name>NADK_SALNS</name>